<evidence type="ECO:0000255" key="1">
    <source>
        <dbReference type="HAMAP-Rule" id="MF_01331"/>
    </source>
</evidence>
<evidence type="ECO:0000305" key="2"/>
<gene>
    <name evidence="1" type="primary">rplV</name>
</gene>
<proteinExistence type="inferred from homology"/>
<feature type="chain" id="PRO_0000125118" description="Large ribosomal subunit protein uL22">
    <location>
        <begin position="1"/>
        <end position="113"/>
    </location>
</feature>
<sequence>MQAKAVARTVRIAPRKARLVIDLIRGKEVGERFAILRHTPKAASPIIEKVLKSAVANAEHNYDMDVNNLVISQAYVDEGPTLKRFRPRAMGRASAINKRTSHITIVVSEKKEG</sequence>
<accession>P23311</accession>
<name>RL22_GEOSE</name>
<protein>
    <recommendedName>
        <fullName evidence="1">Large ribosomal subunit protein uL22</fullName>
    </recommendedName>
    <alternativeName>
        <fullName evidence="2">50S ribosomal protein L22</fullName>
    </alternativeName>
</protein>
<keyword id="KW-0687">Ribonucleoprotein</keyword>
<keyword id="KW-0689">Ribosomal protein</keyword>
<keyword id="KW-0694">RNA-binding</keyword>
<keyword id="KW-0699">rRNA-binding</keyword>
<organism>
    <name type="scientific">Geobacillus stearothermophilus</name>
    <name type="common">Bacillus stearothermophilus</name>
    <dbReference type="NCBI Taxonomy" id="1422"/>
    <lineage>
        <taxon>Bacteria</taxon>
        <taxon>Bacillati</taxon>
        <taxon>Bacillota</taxon>
        <taxon>Bacilli</taxon>
        <taxon>Bacillales</taxon>
        <taxon>Anoxybacillaceae</taxon>
        <taxon>Geobacillus</taxon>
    </lineage>
</organism>
<reference key="1">
    <citation type="journal article" date="1990" name="Biol. Chem. Hoppe-Seyler">
        <title>Nucleotide sequences of Bacillus stearothermophilus ribosomal protein genes: part of the ribosomal S10 operon.</title>
        <authorList>
            <person name="Kroemer W.J."/>
            <person name="Hatakeyama T."/>
            <person name="Kimura M."/>
        </authorList>
    </citation>
    <scope>NUCLEOTIDE SEQUENCE [GENOMIC DNA]</scope>
    <source>
        <strain>ATCC 29609 / DSM 2027 / NCA 1503 / NCIMB 8924</strain>
    </source>
</reference>
<comment type="function">
    <text evidence="1">This protein binds specifically to 23S rRNA; its binding is stimulated by other ribosomal proteins, e.g. L4, L17, and L20. It is important during the early stages of 50S assembly. It makes multiple contacts with different domains of the 23S rRNA in the assembled 50S subunit and ribosome (By similarity).</text>
</comment>
<comment type="function">
    <text evidence="1">The globular domain of the protein is located near the polypeptide exit tunnel on the outside of the subunit, while an extended beta-hairpin is found that lines the wall of the exit tunnel in the center of the 70S ribosome.</text>
</comment>
<comment type="subunit">
    <text evidence="1">Part of the 50S ribosomal subunit.</text>
</comment>
<comment type="similarity">
    <text evidence="1">Belongs to the universal ribosomal protein uL22 family.</text>
</comment>
<dbReference type="EMBL" id="X54994">
    <property type="protein sequence ID" value="CAA38739.1"/>
    <property type="molecule type" value="Genomic_DNA"/>
</dbReference>
<dbReference type="PIR" id="S10612">
    <property type="entry name" value="S10612"/>
</dbReference>
<dbReference type="SMR" id="P23311"/>
<dbReference type="GO" id="GO:0022625">
    <property type="term" value="C:cytosolic large ribosomal subunit"/>
    <property type="evidence" value="ECO:0007669"/>
    <property type="project" value="TreeGrafter"/>
</dbReference>
<dbReference type="GO" id="GO:0019843">
    <property type="term" value="F:rRNA binding"/>
    <property type="evidence" value="ECO:0007669"/>
    <property type="project" value="UniProtKB-UniRule"/>
</dbReference>
<dbReference type="GO" id="GO:0003735">
    <property type="term" value="F:structural constituent of ribosome"/>
    <property type="evidence" value="ECO:0007669"/>
    <property type="project" value="InterPro"/>
</dbReference>
<dbReference type="GO" id="GO:0006412">
    <property type="term" value="P:translation"/>
    <property type="evidence" value="ECO:0007669"/>
    <property type="project" value="UniProtKB-UniRule"/>
</dbReference>
<dbReference type="CDD" id="cd00336">
    <property type="entry name" value="Ribosomal_L22"/>
    <property type="match status" value="1"/>
</dbReference>
<dbReference type="FunFam" id="3.90.470.10:FF:000001">
    <property type="entry name" value="50S ribosomal protein L22"/>
    <property type="match status" value="1"/>
</dbReference>
<dbReference type="Gene3D" id="3.90.470.10">
    <property type="entry name" value="Ribosomal protein L22/L17"/>
    <property type="match status" value="1"/>
</dbReference>
<dbReference type="HAMAP" id="MF_01331_B">
    <property type="entry name" value="Ribosomal_uL22_B"/>
    <property type="match status" value="1"/>
</dbReference>
<dbReference type="InterPro" id="IPR001063">
    <property type="entry name" value="Ribosomal_uL22"/>
</dbReference>
<dbReference type="InterPro" id="IPR005727">
    <property type="entry name" value="Ribosomal_uL22_bac/chlpt-type"/>
</dbReference>
<dbReference type="InterPro" id="IPR047867">
    <property type="entry name" value="Ribosomal_uL22_bac/org-type"/>
</dbReference>
<dbReference type="InterPro" id="IPR018260">
    <property type="entry name" value="Ribosomal_uL22_CS"/>
</dbReference>
<dbReference type="InterPro" id="IPR036394">
    <property type="entry name" value="Ribosomal_uL22_sf"/>
</dbReference>
<dbReference type="NCBIfam" id="TIGR01044">
    <property type="entry name" value="rplV_bact"/>
    <property type="match status" value="1"/>
</dbReference>
<dbReference type="PANTHER" id="PTHR13501">
    <property type="entry name" value="CHLOROPLAST 50S RIBOSOMAL PROTEIN L22-RELATED"/>
    <property type="match status" value="1"/>
</dbReference>
<dbReference type="PANTHER" id="PTHR13501:SF8">
    <property type="entry name" value="LARGE RIBOSOMAL SUBUNIT PROTEIN UL22M"/>
    <property type="match status" value="1"/>
</dbReference>
<dbReference type="Pfam" id="PF00237">
    <property type="entry name" value="Ribosomal_L22"/>
    <property type="match status" value="1"/>
</dbReference>
<dbReference type="SUPFAM" id="SSF54843">
    <property type="entry name" value="Ribosomal protein L22"/>
    <property type="match status" value="1"/>
</dbReference>
<dbReference type="PROSITE" id="PS00464">
    <property type="entry name" value="RIBOSOMAL_L22"/>
    <property type="match status" value="1"/>
</dbReference>